<sequence>MAFRALTTKAAARPLLALGPRSVAMGARYMSTPAPQDPKSKAAAILDSLPGSTALSKTGILATSAAAAIYAISNELYVLNAETILLCTFTGFSFLIAKLVAPAYKEYADKRMQHVSGILNSSRNKHVAAVKERIESVSELKNVTETTKVLFEVSKETLELEAKAFELKQKVDLATEAKAVLDSWVRYEASVRQLQQKQIAESVIGKVQAELANPKFQDKVLQQSVADVEKLFASLK</sequence>
<dbReference type="EMBL" id="AE016818">
    <property type="protein sequence ID" value="AAS52434.2"/>
    <property type="molecule type" value="Genomic_DNA"/>
</dbReference>
<dbReference type="RefSeq" id="NP_984610.2">
    <property type="nucleotide sequence ID" value="NM_209963.2"/>
</dbReference>
<dbReference type="SMR" id="Q758L2"/>
<dbReference type="FunCoup" id="Q758L2">
    <property type="interactions" value="504"/>
</dbReference>
<dbReference type="STRING" id="284811.Q758L2"/>
<dbReference type="EnsemblFungi" id="AAS52434">
    <property type="protein sequence ID" value="AAS52434"/>
    <property type="gene ID" value="AGOS_AEL251C"/>
</dbReference>
<dbReference type="GeneID" id="4620792"/>
<dbReference type="KEGG" id="ago:AGOS_AEL251C"/>
<dbReference type="eggNOG" id="KOG3976">
    <property type="taxonomic scope" value="Eukaryota"/>
</dbReference>
<dbReference type="HOGENOM" id="CLU_077208_0_0_1"/>
<dbReference type="InParanoid" id="Q758L2"/>
<dbReference type="OMA" id="YTEWADG"/>
<dbReference type="OrthoDB" id="67388at2759"/>
<dbReference type="Proteomes" id="UP000000591">
    <property type="component" value="Chromosome V"/>
</dbReference>
<dbReference type="GO" id="GO:0005743">
    <property type="term" value="C:mitochondrial inner membrane"/>
    <property type="evidence" value="ECO:0007669"/>
    <property type="project" value="UniProtKB-SubCell"/>
</dbReference>
<dbReference type="GO" id="GO:0045259">
    <property type="term" value="C:proton-transporting ATP synthase complex"/>
    <property type="evidence" value="ECO:0007669"/>
    <property type="project" value="UniProtKB-KW"/>
</dbReference>
<dbReference type="GO" id="GO:0046933">
    <property type="term" value="F:proton-transporting ATP synthase activity, rotational mechanism"/>
    <property type="evidence" value="ECO:0007669"/>
    <property type="project" value="EnsemblFungi"/>
</dbReference>
<dbReference type="GO" id="GO:0046961">
    <property type="term" value="F:proton-transporting ATPase activity, rotational mechanism"/>
    <property type="evidence" value="ECO:0007669"/>
    <property type="project" value="EnsemblFungi"/>
</dbReference>
<dbReference type="GO" id="GO:0065003">
    <property type="term" value="P:protein-containing complex assembly"/>
    <property type="evidence" value="ECO:0007669"/>
    <property type="project" value="EnsemblFungi"/>
</dbReference>
<dbReference type="GO" id="GO:0015986">
    <property type="term" value="P:proton motive force-driven ATP synthesis"/>
    <property type="evidence" value="ECO:0000318"/>
    <property type="project" value="GO_Central"/>
</dbReference>
<dbReference type="FunFam" id="1.20.5.2210:FF:000002">
    <property type="entry name" value="ATP synthase subunit 4 mitochondrial"/>
    <property type="match status" value="1"/>
</dbReference>
<dbReference type="Gene3D" id="1.20.5.2210">
    <property type="match status" value="1"/>
</dbReference>
<dbReference type="InterPro" id="IPR008688">
    <property type="entry name" value="ATP_synth_Bsub_B/MI25"/>
</dbReference>
<dbReference type="InterPro" id="IPR013837">
    <property type="entry name" value="ATP_synth_F0_suB"/>
</dbReference>
<dbReference type="PANTHER" id="PTHR12733:SF3">
    <property type="entry name" value="ATP SYNTHASE F(0) COMPLEX SUBUNIT B1, MITOCHONDRIAL"/>
    <property type="match status" value="1"/>
</dbReference>
<dbReference type="PANTHER" id="PTHR12733">
    <property type="entry name" value="MITOCHONDRIAL ATP SYNTHASE B CHAIN"/>
    <property type="match status" value="1"/>
</dbReference>
<dbReference type="Pfam" id="PF05405">
    <property type="entry name" value="Mt_ATP-synt_B"/>
    <property type="match status" value="1"/>
</dbReference>
<dbReference type="SUPFAM" id="SSF161060">
    <property type="entry name" value="ATP synthase B chain-like"/>
    <property type="match status" value="1"/>
</dbReference>
<keyword id="KW-0138">CF(0)</keyword>
<keyword id="KW-0375">Hydrogen ion transport</keyword>
<keyword id="KW-0406">Ion transport</keyword>
<keyword id="KW-0472">Membrane</keyword>
<keyword id="KW-0496">Mitochondrion</keyword>
<keyword id="KW-0999">Mitochondrion inner membrane</keyword>
<keyword id="KW-1185">Reference proteome</keyword>
<keyword id="KW-0809">Transit peptide</keyword>
<keyword id="KW-0813">Transport</keyword>
<proteinExistence type="inferred from homology"/>
<gene>
    <name type="primary">ATP4</name>
    <name type="ordered locus">AEL251C</name>
</gene>
<organism>
    <name type="scientific">Eremothecium gossypii (strain ATCC 10895 / CBS 109.51 / FGSC 9923 / NRRL Y-1056)</name>
    <name type="common">Yeast</name>
    <name type="synonym">Ashbya gossypii</name>
    <dbReference type="NCBI Taxonomy" id="284811"/>
    <lineage>
        <taxon>Eukaryota</taxon>
        <taxon>Fungi</taxon>
        <taxon>Dikarya</taxon>
        <taxon>Ascomycota</taxon>
        <taxon>Saccharomycotina</taxon>
        <taxon>Saccharomycetes</taxon>
        <taxon>Saccharomycetales</taxon>
        <taxon>Saccharomycetaceae</taxon>
        <taxon>Eremothecium</taxon>
    </lineage>
</organism>
<accession>Q758L2</accession>
<feature type="transit peptide" description="Mitochondrion" evidence="2">
    <location>
        <begin position="1"/>
        <end position="29"/>
    </location>
</feature>
<feature type="chain" id="PRO_0000002518" description="ATP synthase subunit 4, mitochondrial">
    <location>
        <begin position="30"/>
        <end position="236"/>
    </location>
</feature>
<evidence type="ECO:0000250" key="1"/>
<evidence type="ECO:0000255" key="2"/>
<evidence type="ECO:0000305" key="3"/>
<reference key="1">
    <citation type="journal article" date="2004" name="Science">
        <title>The Ashbya gossypii genome as a tool for mapping the ancient Saccharomyces cerevisiae genome.</title>
        <authorList>
            <person name="Dietrich F.S."/>
            <person name="Voegeli S."/>
            <person name="Brachat S."/>
            <person name="Lerch A."/>
            <person name="Gates K."/>
            <person name="Steiner S."/>
            <person name="Mohr C."/>
            <person name="Poehlmann R."/>
            <person name="Luedi P."/>
            <person name="Choi S."/>
            <person name="Wing R.A."/>
            <person name="Flavier A."/>
            <person name="Gaffney T.D."/>
            <person name="Philippsen P."/>
        </authorList>
    </citation>
    <scope>NUCLEOTIDE SEQUENCE [LARGE SCALE GENOMIC DNA]</scope>
    <source>
        <strain>ATCC 10895 / CBS 109.51 / FGSC 9923 / NRRL Y-1056</strain>
    </source>
</reference>
<reference key="2">
    <citation type="journal article" date="2013" name="G3 (Bethesda)">
        <title>Genomes of Ashbya fungi isolated from insects reveal four mating-type loci, numerous translocations, lack of transposons, and distinct gene duplications.</title>
        <authorList>
            <person name="Dietrich F.S."/>
            <person name="Voegeli S."/>
            <person name="Kuo S."/>
            <person name="Philippsen P."/>
        </authorList>
    </citation>
    <scope>GENOME REANNOTATION</scope>
    <scope>SEQUENCE REVISION TO 189; 194; 196; 198 AND C-TERMINUS</scope>
    <source>
        <strain>ATCC 10895 / CBS 109.51 / FGSC 9923 / NRRL Y-1056</strain>
    </source>
</reference>
<comment type="function">
    <text evidence="1">Mitochondrial membrane ATP synthase (F(1)F(0) ATP synthase or Complex V) produces ATP from ADP in the presence of a proton gradient across the membrane which is generated by electron transport complexes of the respiratory chain. F-type ATPases consist of two structural domains, F(1) - containing the extramembraneous catalytic core, and F(0) - containing the membrane proton channel, linked together by a central stalk and a peripheral stalk. During catalysis, ATP synthesis in the catalytic domain of F(1) is coupled via a rotary mechanism of the central stalk subunits to proton translocation. Part of the complex F(0) domain and the peripheric stalk, which acts as a stator to hold the catalytic alpha(3)beta(3) subcomplex and subunit a/ATP6 static relative to the rotary elements (By similarity).</text>
</comment>
<comment type="subunit">
    <text evidence="1">F-type ATPases have 2 components, CF(1) - the catalytic core - and CF(0) - the membrane proton channel. In yeast, the dimeric form of ATP synthase consists of 17 polypeptides: alpha, beta, gamma, delta, epsilon, 4 (B), 5 (OSCP), 6 (A), 8, 9 (C), d, E (Tim11), f, g, h, i/j and k (By similarity).</text>
</comment>
<comment type="subcellular location">
    <subcellularLocation>
        <location evidence="1">Mitochondrion</location>
    </subcellularLocation>
    <subcellularLocation>
        <location evidence="1">Mitochondrion inner membrane</location>
    </subcellularLocation>
</comment>
<comment type="similarity">
    <text evidence="3">Belongs to the eukaryotic ATPase subunit B family.</text>
</comment>
<name>ATPF_EREGS</name>
<protein>
    <recommendedName>
        <fullName>ATP synthase subunit 4, mitochondrial</fullName>
    </recommendedName>
</protein>